<keyword id="KW-0963">Cytoplasm</keyword>
<keyword id="KW-0255">Endonuclease</keyword>
<keyword id="KW-0378">Hydrolase</keyword>
<keyword id="KW-0464">Manganese</keyword>
<keyword id="KW-0479">Metal-binding</keyword>
<keyword id="KW-0540">Nuclease</keyword>
<name>RNH2_BURM7</name>
<reference key="1">
    <citation type="journal article" date="2010" name="Genome Biol. Evol.">
        <title>Continuing evolution of Burkholderia mallei through genome reduction and large-scale rearrangements.</title>
        <authorList>
            <person name="Losada L."/>
            <person name="Ronning C.M."/>
            <person name="DeShazer D."/>
            <person name="Woods D."/>
            <person name="Fedorova N."/>
            <person name="Kim H.S."/>
            <person name="Shabalina S.A."/>
            <person name="Pearson T.R."/>
            <person name="Brinkac L."/>
            <person name="Tan P."/>
            <person name="Nandi T."/>
            <person name="Crabtree J."/>
            <person name="Badger J."/>
            <person name="Beckstrom-Sternberg S."/>
            <person name="Saqib M."/>
            <person name="Schutzer S.E."/>
            <person name="Keim P."/>
            <person name="Nierman W.C."/>
        </authorList>
    </citation>
    <scope>NUCLEOTIDE SEQUENCE [LARGE SCALE GENOMIC DNA]</scope>
    <source>
        <strain>NCTC 10247</strain>
    </source>
</reference>
<gene>
    <name evidence="1" type="primary">rnhB</name>
    <name type="ordered locus">BMA10247_1313</name>
</gene>
<dbReference type="EC" id="3.1.26.4" evidence="1"/>
<dbReference type="EMBL" id="CP000548">
    <property type="protein sequence ID" value="ABO04010.1"/>
    <property type="molecule type" value="Genomic_DNA"/>
</dbReference>
<dbReference type="RefSeq" id="WP_004191384.1">
    <property type="nucleotide sequence ID" value="NZ_CP007802.1"/>
</dbReference>
<dbReference type="SMR" id="A3MKS8"/>
<dbReference type="GeneID" id="92979267"/>
<dbReference type="KEGG" id="bmaz:BM44_1812"/>
<dbReference type="KEGG" id="bmn:BMA10247_1313"/>
<dbReference type="PATRIC" id="fig|320389.8.peg.2027"/>
<dbReference type="GO" id="GO:0005737">
    <property type="term" value="C:cytoplasm"/>
    <property type="evidence" value="ECO:0007669"/>
    <property type="project" value="UniProtKB-SubCell"/>
</dbReference>
<dbReference type="GO" id="GO:0032299">
    <property type="term" value="C:ribonuclease H2 complex"/>
    <property type="evidence" value="ECO:0007669"/>
    <property type="project" value="TreeGrafter"/>
</dbReference>
<dbReference type="GO" id="GO:0030145">
    <property type="term" value="F:manganese ion binding"/>
    <property type="evidence" value="ECO:0007669"/>
    <property type="project" value="UniProtKB-UniRule"/>
</dbReference>
<dbReference type="GO" id="GO:0003723">
    <property type="term" value="F:RNA binding"/>
    <property type="evidence" value="ECO:0007669"/>
    <property type="project" value="InterPro"/>
</dbReference>
<dbReference type="GO" id="GO:0004523">
    <property type="term" value="F:RNA-DNA hybrid ribonuclease activity"/>
    <property type="evidence" value="ECO:0007669"/>
    <property type="project" value="UniProtKB-UniRule"/>
</dbReference>
<dbReference type="GO" id="GO:0043137">
    <property type="term" value="P:DNA replication, removal of RNA primer"/>
    <property type="evidence" value="ECO:0007669"/>
    <property type="project" value="TreeGrafter"/>
</dbReference>
<dbReference type="GO" id="GO:0006298">
    <property type="term" value="P:mismatch repair"/>
    <property type="evidence" value="ECO:0007669"/>
    <property type="project" value="TreeGrafter"/>
</dbReference>
<dbReference type="CDD" id="cd07182">
    <property type="entry name" value="RNase_HII_bacteria_HII_like"/>
    <property type="match status" value="1"/>
</dbReference>
<dbReference type="FunFam" id="3.30.420.10:FF:000006">
    <property type="entry name" value="Ribonuclease HII"/>
    <property type="match status" value="1"/>
</dbReference>
<dbReference type="Gene3D" id="3.30.420.10">
    <property type="entry name" value="Ribonuclease H-like superfamily/Ribonuclease H"/>
    <property type="match status" value="1"/>
</dbReference>
<dbReference type="HAMAP" id="MF_00052_B">
    <property type="entry name" value="RNase_HII_B"/>
    <property type="match status" value="1"/>
</dbReference>
<dbReference type="InterPro" id="IPR022898">
    <property type="entry name" value="RNase_HII"/>
</dbReference>
<dbReference type="InterPro" id="IPR001352">
    <property type="entry name" value="RNase_HII/HIII"/>
</dbReference>
<dbReference type="InterPro" id="IPR024567">
    <property type="entry name" value="RNase_HII/HIII_dom"/>
</dbReference>
<dbReference type="InterPro" id="IPR012337">
    <property type="entry name" value="RNaseH-like_sf"/>
</dbReference>
<dbReference type="InterPro" id="IPR036397">
    <property type="entry name" value="RNaseH_sf"/>
</dbReference>
<dbReference type="NCBIfam" id="NF000594">
    <property type="entry name" value="PRK00015.1-1"/>
    <property type="match status" value="1"/>
</dbReference>
<dbReference type="NCBIfam" id="NF000595">
    <property type="entry name" value="PRK00015.1-3"/>
    <property type="match status" value="1"/>
</dbReference>
<dbReference type="NCBIfam" id="NF000596">
    <property type="entry name" value="PRK00015.1-4"/>
    <property type="match status" value="1"/>
</dbReference>
<dbReference type="PANTHER" id="PTHR10954">
    <property type="entry name" value="RIBONUCLEASE H2 SUBUNIT A"/>
    <property type="match status" value="1"/>
</dbReference>
<dbReference type="PANTHER" id="PTHR10954:SF18">
    <property type="entry name" value="RIBONUCLEASE HII"/>
    <property type="match status" value="1"/>
</dbReference>
<dbReference type="Pfam" id="PF01351">
    <property type="entry name" value="RNase_HII"/>
    <property type="match status" value="1"/>
</dbReference>
<dbReference type="SUPFAM" id="SSF53098">
    <property type="entry name" value="Ribonuclease H-like"/>
    <property type="match status" value="1"/>
</dbReference>
<dbReference type="PROSITE" id="PS51975">
    <property type="entry name" value="RNASE_H_2"/>
    <property type="match status" value="1"/>
</dbReference>
<organism>
    <name type="scientific">Burkholderia mallei (strain NCTC 10247)</name>
    <dbReference type="NCBI Taxonomy" id="320389"/>
    <lineage>
        <taxon>Bacteria</taxon>
        <taxon>Pseudomonadati</taxon>
        <taxon>Pseudomonadota</taxon>
        <taxon>Betaproteobacteria</taxon>
        <taxon>Burkholderiales</taxon>
        <taxon>Burkholderiaceae</taxon>
        <taxon>Burkholderia</taxon>
        <taxon>pseudomallei group</taxon>
    </lineage>
</organism>
<evidence type="ECO:0000255" key="1">
    <source>
        <dbReference type="HAMAP-Rule" id="MF_00052"/>
    </source>
</evidence>
<evidence type="ECO:0000255" key="2">
    <source>
        <dbReference type="PROSITE-ProRule" id="PRU01319"/>
    </source>
</evidence>
<proteinExistence type="inferred from homology"/>
<comment type="function">
    <text evidence="1">Endonuclease that specifically degrades the RNA of RNA-DNA hybrids.</text>
</comment>
<comment type="catalytic activity">
    <reaction evidence="1">
        <text>Endonucleolytic cleavage to 5'-phosphomonoester.</text>
        <dbReference type="EC" id="3.1.26.4"/>
    </reaction>
</comment>
<comment type="cofactor">
    <cofactor evidence="1">
        <name>Mn(2+)</name>
        <dbReference type="ChEBI" id="CHEBI:29035"/>
    </cofactor>
    <cofactor evidence="1">
        <name>Mg(2+)</name>
        <dbReference type="ChEBI" id="CHEBI:18420"/>
    </cofactor>
    <text evidence="1">Manganese or magnesium. Binds 1 divalent metal ion per monomer in the absence of substrate. May bind a second metal ion after substrate binding.</text>
</comment>
<comment type="subcellular location">
    <subcellularLocation>
        <location evidence="1">Cytoplasm</location>
    </subcellularLocation>
</comment>
<comment type="similarity">
    <text evidence="1">Belongs to the RNase HII family.</text>
</comment>
<feature type="chain" id="PRO_1000031124" description="Ribonuclease HII">
    <location>
        <begin position="1"/>
        <end position="214"/>
    </location>
</feature>
<feature type="domain" description="RNase H type-2" evidence="2">
    <location>
        <begin position="26"/>
        <end position="214"/>
    </location>
</feature>
<feature type="binding site" evidence="1">
    <location>
        <position position="32"/>
    </location>
    <ligand>
        <name>a divalent metal cation</name>
        <dbReference type="ChEBI" id="CHEBI:60240"/>
    </ligand>
</feature>
<feature type="binding site" evidence="1">
    <location>
        <position position="33"/>
    </location>
    <ligand>
        <name>a divalent metal cation</name>
        <dbReference type="ChEBI" id="CHEBI:60240"/>
    </ligand>
</feature>
<feature type="binding site" evidence="1">
    <location>
        <position position="124"/>
    </location>
    <ligand>
        <name>a divalent metal cation</name>
        <dbReference type="ChEBI" id="CHEBI:60240"/>
    </ligand>
</feature>
<protein>
    <recommendedName>
        <fullName evidence="1">Ribonuclease HII</fullName>
        <shortName evidence="1">RNase HII</shortName>
        <ecNumber evidence="1">3.1.26.4</ecNumber>
    </recommendedName>
</protein>
<sequence>MATTRKPRGGAGGATQPALDFDAPGEIVCGVDEAGRGPLAGPVVAAAVVLDPARPIVGLDDSKALSAKKRERLFDEIVAYALAYSVASASVEEIDSLNILHATMLAMKRAVEGLSVLPTLAKIDGNRCPMLAIRSEAIVGGDALVPSISAASILAKVTRDRMLVELHQQFPMYGFDAHAGYGTPQHLAALREHGPCEHHRRSFAPVREAFDLIR</sequence>
<accession>A3MKS8</accession>